<protein>
    <recommendedName>
        <fullName evidence="1">Apolipoprotein N-acyltransferase</fullName>
        <shortName evidence="1">ALP N-acyltransferase</shortName>
        <ecNumber evidence="1">2.3.1.269</ecNumber>
    </recommendedName>
</protein>
<evidence type="ECO:0000255" key="1">
    <source>
        <dbReference type="HAMAP-Rule" id="MF_01148"/>
    </source>
</evidence>
<keyword id="KW-0012">Acyltransferase</keyword>
<keyword id="KW-0997">Cell inner membrane</keyword>
<keyword id="KW-1003">Cell membrane</keyword>
<keyword id="KW-0472">Membrane</keyword>
<keyword id="KW-1185">Reference proteome</keyword>
<keyword id="KW-0808">Transferase</keyword>
<keyword id="KW-0812">Transmembrane</keyword>
<keyword id="KW-1133">Transmembrane helix</keyword>
<reference key="1">
    <citation type="journal article" date="2001" name="Science">
        <title>The genome of the natural genetic engineer Agrobacterium tumefaciens C58.</title>
        <authorList>
            <person name="Wood D.W."/>
            <person name="Setubal J.C."/>
            <person name="Kaul R."/>
            <person name="Monks D.E."/>
            <person name="Kitajima J.P."/>
            <person name="Okura V.K."/>
            <person name="Zhou Y."/>
            <person name="Chen L."/>
            <person name="Wood G.E."/>
            <person name="Almeida N.F. Jr."/>
            <person name="Woo L."/>
            <person name="Chen Y."/>
            <person name="Paulsen I.T."/>
            <person name="Eisen J.A."/>
            <person name="Karp P.D."/>
            <person name="Bovee D. Sr."/>
            <person name="Chapman P."/>
            <person name="Clendenning J."/>
            <person name="Deatherage G."/>
            <person name="Gillet W."/>
            <person name="Grant C."/>
            <person name="Kutyavin T."/>
            <person name="Levy R."/>
            <person name="Li M.-J."/>
            <person name="McClelland E."/>
            <person name="Palmieri A."/>
            <person name="Raymond C."/>
            <person name="Rouse G."/>
            <person name="Saenphimmachak C."/>
            <person name="Wu Z."/>
            <person name="Romero P."/>
            <person name="Gordon D."/>
            <person name="Zhang S."/>
            <person name="Yoo H."/>
            <person name="Tao Y."/>
            <person name="Biddle P."/>
            <person name="Jung M."/>
            <person name="Krespan W."/>
            <person name="Perry M."/>
            <person name="Gordon-Kamm B."/>
            <person name="Liao L."/>
            <person name="Kim S."/>
            <person name="Hendrick C."/>
            <person name="Zhao Z.-Y."/>
            <person name="Dolan M."/>
            <person name="Chumley F."/>
            <person name="Tingey S.V."/>
            <person name="Tomb J.-F."/>
            <person name="Gordon M.P."/>
            <person name="Olson M.V."/>
            <person name="Nester E.W."/>
        </authorList>
    </citation>
    <scope>NUCLEOTIDE SEQUENCE [LARGE SCALE GENOMIC DNA]</scope>
    <source>
        <strain>C58 / ATCC 33970</strain>
    </source>
</reference>
<reference key="2">
    <citation type="journal article" date="2001" name="Science">
        <title>Genome sequence of the plant pathogen and biotechnology agent Agrobacterium tumefaciens C58.</title>
        <authorList>
            <person name="Goodner B."/>
            <person name="Hinkle G."/>
            <person name="Gattung S."/>
            <person name="Miller N."/>
            <person name="Blanchard M."/>
            <person name="Qurollo B."/>
            <person name="Goldman B.S."/>
            <person name="Cao Y."/>
            <person name="Askenazi M."/>
            <person name="Halling C."/>
            <person name="Mullin L."/>
            <person name="Houmiel K."/>
            <person name="Gordon J."/>
            <person name="Vaudin M."/>
            <person name="Iartchouk O."/>
            <person name="Epp A."/>
            <person name="Liu F."/>
            <person name="Wollam C."/>
            <person name="Allinger M."/>
            <person name="Doughty D."/>
            <person name="Scott C."/>
            <person name="Lappas C."/>
            <person name="Markelz B."/>
            <person name="Flanagan C."/>
            <person name="Crowell C."/>
            <person name="Gurson J."/>
            <person name="Lomo C."/>
            <person name="Sear C."/>
            <person name="Strub G."/>
            <person name="Cielo C."/>
            <person name="Slater S."/>
        </authorList>
    </citation>
    <scope>NUCLEOTIDE SEQUENCE [LARGE SCALE GENOMIC DNA]</scope>
    <source>
        <strain>C58 / ATCC 33970</strain>
    </source>
</reference>
<sequence>MERLAGRVMLAGGMSRAVMAIAAGAVGALALPPFGFFAALFFSFTLLVWLVDGCTGKPGGGLFSRILPAFGIGWCFGFGYFVAGLWWLGNALLLEADEFAWALPLAILGLPALLALFYGFAVAAANLLWSDGLGRIAALAAAFGVSEWLRSFLATGFPWNAIGYGIMPIPIMMQSAHLLGLLSITTLAVFIFASPALIGTKKGMGPGLALAGLLLAAHFGYGFYRLQTPAETPADALTVRIVQPAIDQSRKMLNTDRAEIFAEHLRLSALPPGEGKKRPDIIVWPETSVPFILTQNPDALAEIASTLEDGQVLFTGAVRMEDQGAGRPPRYYNSVYAIDSQGEIIGATDKVHLTPFGEYVPFEGILREFGIDNVIALPGGFSAASSRTPLTLPSGKTFYPLICYEIIFPGEMTPGLQGAAAILNVTNDGWFGDTPGPYQHFLQARVRAVETGVPVIRGANTGISAVIDPYGRIIAGLDYGRVGILDATLSGGSNDAFTYDTHRTYFWLIFSILMIVAVFPALSFARRQN</sequence>
<gene>
    <name evidence="1" type="primary">lnt</name>
    <name type="ordered locus">Atu0360</name>
    <name type="ORF">AGR_C_629</name>
</gene>
<accession>Q8UID7</accession>
<name>LNT_AGRFC</name>
<organism>
    <name type="scientific">Agrobacterium fabrum (strain C58 / ATCC 33970)</name>
    <name type="common">Agrobacterium tumefaciens (strain C58)</name>
    <dbReference type="NCBI Taxonomy" id="176299"/>
    <lineage>
        <taxon>Bacteria</taxon>
        <taxon>Pseudomonadati</taxon>
        <taxon>Pseudomonadota</taxon>
        <taxon>Alphaproteobacteria</taxon>
        <taxon>Hyphomicrobiales</taxon>
        <taxon>Rhizobiaceae</taxon>
        <taxon>Rhizobium/Agrobacterium group</taxon>
        <taxon>Agrobacterium</taxon>
        <taxon>Agrobacterium tumefaciens complex</taxon>
    </lineage>
</organism>
<comment type="function">
    <text evidence="1">Catalyzes the phospholipid dependent N-acylation of the N-terminal cysteine of apolipoprotein, the last step in lipoprotein maturation.</text>
</comment>
<comment type="catalytic activity">
    <reaction evidence="1">
        <text>N-terminal S-1,2-diacyl-sn-glyceryl-L-cysteinyl-[lipoprotein] + a glycerophospholipid = N-acyl-S-1,2-diacyl-sn-glyceryl-L-cysteinyl-[lipoprotein] + a 2-acyl-sn-glycero-3-phospholipid + H(+)</text>
        <dbReference type="Rhea" id="RHEA:48228"/>
        <dbReference type="Rhea" id="RHEA-COMP:14681"/>
        <dbReference type="Rhea" id="RHEA-COMP:14684"/>
        <dbReference type="ChEBI" id="CHEBI:15378"/>
        <dbReference type="ChEBI" id="CHEBI:136912"/>
        <dbReference type="ChEBI" id="CHEBI:140656"/>
        <dbReference type="ChEBI" id="CHEBI:140657"/>
        <dbReference type="ChEBI" id="CHEBI:140660"/>
        <dbReference type="EC" id="2.3.1.269"/>
    </reaction>
</comment>
<comment type="pathway">
    <text evidence="1">Protein modification; lipoprotein biosynthesis (N-acyl transfer).</text>
</comment>
<comment type="subcellular location">
    <subcellularLocation>
        <location evidence="1">Cell inner membrane</location>
        <topology evidence="1">Multi-pass membrane protein</topology>
    </subcellularLocation>
</comment>
<comment type="similarity">
    <text evidence="1">Belongs to the CN hydrolase family. Apolipoprotein N-acyltransferase subfamily.</text>
</comment>
<proteinExistence type="inferred from homology"/>
<feature type="chain" id="PRO_0000178041" description="Apolipoprotein N-acyltransferase">
    <location>
        <begin position="1"/>
        <end position="529"/>
    </location>
</feature>
<feature type="transmembrane region" description="Helical" evidence="1">
    <location>
        <begin position="8"/>
        <end position="28"/>
    </location>
</feature>
<feature type="transmembrane region" description="Helical" evidence="1">
    <location>
        <begin position="66"/>
        <end position="86"/>
    </location>
</feature>
<feature type="transmembrane region" description="Helical" evidence="1">
    <location>
        <begin position="105"/>
        <end position="125"/>
    </location>
</feature>
<feature type="transmembrane region" description="Helical" evidence="1">
    <location>
        <begin position="178"/>
        <end position="198"/>
    </location>
</feature>
<feature type="transmembrane region" description="Helical" evidence="1">
    <location>
        <begin position="203"/>
        <end position="223"/>
    </location>
</feature>
<feature type="transmembrane region" description="Helical" evidence="1">
    <location>
        <begin position="505"/>
        <end position="525"/>
    </location>
</feature>
<feature type="domain" description="CN hydrolase" evidence="1">
    <location>
        <begin position="242"/>
        <end position="491"/>
    </location>
</feature>
<feature type="active site" description="Proton acceptor" evidence="1">
    <location>
        <position position="286"/>
    </location>
</feature>
<feature type="active site" evidence="1">
    <location>
        <position position="350"/>
    </location>
</feature>
<feature type="active site" description="Nucleophile" evidence="1">
    <location>
        <position position="403"/>
    </location>
</feature>
<dbReference type="EC" id="2.3.1.269" evidence="1"/>
<dbReference type="EMBL" id="AE007869">
    <property type="protein sequence ID" value="AAK86177.1"/>
    <property type="molecule type" value="Genomic_DNA"/>
</dbReference>
<dbReference type="PIR" id="AH2620">
    <property type="entry name" value="AH2620"/>
</dbReference>
<dbReference type="PIR" id="H97402">
    <property type="entry name" value="H97402"/>
</dbReference>
<dbReference type="RefSeq" id="NP_353392.1">
    <property type="nucleotide sequence ID" value="NC_003062.2"/>
</dbReference>
<dbReference type="RefSeq" id="WP_010970842.1">
    <property type="nucleotide sequence ID" value="NC_003062.2"/>
</dbReference>
<dbReference type="SMR" id="Q8UID7"/>
<dbReference type="STRING" id="176299.Atu0360"/>
<dbReference type="EnsemblBacteria" id="AAK86177">
    <property type="protein sequence ID" value="AAK86177"/>
    <property type="gene ID" value="Atu0360"/>
</dbReference>
<dbReference type="GeneID" id="1132398"/>
<dbReference type="KEGG" id="atu:Atu0360"/>
<dbReference type="PATRIC" id="fig|176299.10.peg.351"/>
<dbReference type="eggNOG" id="COG0815">
    <property type="taxonomic scope" value="Bacteria"/>
</dbReference>
<dbReference type="HOGENOM" id="CLU_019563_3_1_5"/>
<dbReference type="OrthoDB" id="9804277at2"/>
<dbReference type="PhylomeDB" id="Q8UID7"/>
<dbReference type="BioCyc" id="AGRO:ATU0360-MONOMER"/>
<dbReference type="UniPathway" id="UPA00666"/>
<dbReference type="Proteomes" id="UP000000813">
    <property type="component" value="Chromosome circular"/>
</dbReference>
<dbReference type="GO" id="GO:0005886">
    <property type="term" value="C:plasma membrane"/>
    <property type="evidence" value="ECO:0007669"/>
    <property type="project" value="UniProtKB-SubCell"/>
</dbReference>
<dbReference type="GO" id="GO:0016410">
    <property type="term" value="F:N-acyltransferase activity"/>
    <property type="evidence" value="ECO:0007669"/>
    <property type="project" value="UniProtKB-UniRule"/>
</dbReference>
<dbReference type="GO" id="GO:0042158">
    <property type="term" value="P:lipoprotein biosynthetic process"/>
    <property type="evidence" value="ECO:0007669"/>
    <property type="project" value="UniProtKB-UniRule"/>
</dbReference>
<dbReference type="CDD" id="cd07571">
    <property type="entry name" value="ALP_N-acyl_transferase"/>
    <property type="match status" value="1"/>
</dbReference>
<dbReference type="Gene3D" id="3.60.110.10">
    <property type="entry name" value="Carbon-nitrogen hydrolase"/>
    <property type="match status" value="1"/>
</dbReference>
<dbReference type="HAMAP" id="MF_01148">
    <property type="entry name" value="Lnt"/>
    <property type="match status" value="1"/>
</dbReference>
<dbReference type="InterPro" id="IPR004563">
    <property type="entry name" value="Apolipo_AcylTrfase"/>
</dbReference>
<dbReference type="InterPro" id="IPR003010">
    <property type="entry name" value="C-N_Hydrolase"/>
</dbReference>
<dbReference type="InterPro" id="IPR036526">
    <property type="entry name" value="C-N_Hydrolase_sf"/>
</dbReference>
<dbReference type="InterPro" id="IPR045378">
    <property type="entry name" value="LNT_N"/>
</dbReference>
<dbReference type="NCBIfam" id="TIGR00546">
    <property type="entry name" value="lnt"/>
    <property type="match status" value="1"/>
</dbReference>
<dbReference type="PANTHER" id="PTHR38686">
    <property type="entry name" value="APOLIPOPROTEIN N-ACYLTRANSFERASE"/>
    <property type="match status" value="1"/>
</dbReference>
<dbReference type="PANTHER" id="PTHR38686:SF1">
    <property type="entry name" value="APOLIPOPROTEIN N-ACYLTRANSFERASE"/>
    <property type="match status" value="1"/>
</dbReference>
<dbReference type="Pfam" id="PF00795">
    <property type="entry name" value="CN_hydrolase"/>
    <property type="match status" value="1"/>
</dbReference>
<dbReference type="Pfam" id="PF20154">
    <property type="entry name" value="LNT_N"/>
    <property type="match status" value="1"/>
</dbReference>
<dbReference type="SUPFAM" id="SSF56317">
    <property type="entry name" value="Carbon-nitrogen hydrolase"/>
    <property type="match status" value="1"/>
</dbReference>
<dbReference type="PROSITE" id="PS50263">
    <property type="entry name" value="CN_HYDROLASE"/>
    <property type="match status" value="1"/>
</dbReference>